<organism>
    <name type="scientific">Aspergillus nomiae NRRL (strain ATCC 15546 / NRRL 13137 / CBS 260.88 / M93)</name>
    <dbReference type="NCBI Taxonomy" id="1509407"/>
    <lineage>
        <taxon>Eukaryota</taxon>
        <taxon>Fungi</taxon>
        <taxon>Dikarya</taxon>
        <taxon>Ascomycota</taxon>
        <taxon>Pezizomycotina</taxon>
        <taxon>Eurotiomycetes</taxon>
        <taxon>Eurotiomycetidae</taxon>
        <taxon>Eurotiales</taxon>
        <taxon>Aspergillaceae</taxon>
        <taxon>Aspergillus</taxon>
        <taxon>Aspergillus subgen. Circumdati</taxon>
    </lineage>
</organism>
<sequence length="2506" mass="272292">MQPHNPYVEPIAIVGMACRLPGDVVSPSKLWDLLVQERSAQSKVPANRFNVDSWYHPDKQRPGSITTRGGYFLSQDDSFRQFDPSFFGINPKEAASMDPQQRKLLEVVYESFEAAGARLEDVSGSKTACYVGNFTWDIGQMQARDINHGAPYHMTGGGLTILSNRINYVFNLKGPSMTIDTACSSTMYALHLACRSLQAGDCSAAVVAGTNLIFGIEQQIGSVRLGVLSPTSVCHTFDESADGYARAEAVGSLYLKTLSQAIADGDPIRAVIRGTAINANGRSPGISHPSAQEQEMVIRQAYARAGLRLDQTGYFECHGTGTPVGDPLEVSAIGNVFGPVRSAESPLLIGSVKTNLGHGEAASAISSLIKTALCLEKGEIPATIGIKRLNPALNLRDGRLKIVQTLSPWPDSQQYRRASVNSFGYGGANAHAILDAVQSYLGEFCQSIPASLTTPGQPSLKRYFLLPFSAHSESTLRQNIKSISHSFKCDVNLPDLAYTLASCRSNHSERAFALVAGDSSCSKLVDSLASDKLTFGTAMGAVPKLAFIFTGQGAQWPQMGHELVQHYAVVRQTLRDLGNVIAKLPNPPEWDLLDALDQPKSKSRVNEAELSQPLTTAIQIAIVNLLRSWGVHPTAVVGHSSGEIAAAYSAGLISAAEAIIIAYQRGAATVKSTQRGAMLAVGIGSDEALQAIHDIPDIGIACYNAPDSVTLSGTEEAVDMARGRFSRAGVFNRKLITSGNAYHSKLMAEAGQFYEASLKQCLLPNDPPSTGNADITMFSSVTEEPVSTLALEYWRQNLESPVHFDQATQKLLKARPEVNLVVEIGPHSALAAPLKAIRAAVGYSPERLVYLSALKRNSDSVECLLKMVGSLFLSGLPFALSTVNADATVHRDDKTGSEMIQYSHGSFIRDLPTYQWVYDEEPLWNESRLSTDIRFRSYPHHDLLGSRLPGTSNIAPAWRNMISLESVPWLRDHRVGDDIVFPAAGYVTLAIEAITQIRRSTISAVTDAYTLPAYEFAVSTFVNGTWTQHATGSVQVDNDSASDQSISSVENMAGSRGGINKDSYDRRWYGAMDKVGLIYGPGFKTLSDIRASPEHHWATAEVSGNATDKLMGRQSQYILHPTTIDACLQLSIIAAHHGKPESLKKVYLPVLIPKLTIWPHHSSQGLPLTACGRGLHRGLRSVQTFTGLSNPNHQTILQAEISFSSLETAVGENGTGKSPQPYTRLVWKPDLDRMTNTQAQILFHGTQDDISTSKHFFSRLEEVTRLAIRSSAERLPENLQADRLPGHMQKFLEWLKMEGLALSTNEAADGLTGESLLDKIDAIARSVEQTVPEAAMVAQLNSRMPEILAGTVGALDVMVEDNLMSRIYEEGFGQTGAYAKLSDVIDLVAHKDPRLRILELGAGTGGATKPMLKALHGDTPLPKYEKYDFTDVSKAFLGVAQDKFQGYRNLDFGILDIEKDPVAQGFPEQSYDIVFASNVIHATRNVASSLRNCKRLLKPDGKLLIIETTKQRQVTGFMLGALPGYWLGADDGRPSSPFLSKTLWHQRLLDAGLSGADIVLDDYPEPADCTTLIMSRNSSEAANHASMNGANHTNGANSINNISEINGVTGVNQLNGAKSLKPSTVTLIYRREPQPLQRALEAKYAQLGISTRSMALEDIPNSLERDSRTIMLAELEDPLMARMTPAEMHAVQRYTQQAATAIWVTNGNVLRGQDPEKSLVFGLAKSIMTEQPSFHLCSVDVDIGDGKADCGNSTTLLVETEMAFHHDPNGELDTELVEKDGLVYISRYVTDDTENANFERYFAIKPTVMALARGESSYYSLQFENVGRVDSFYFKEQSLKPLGENEVLLDVDAAPLDSLSIAALKGQIASPCFGLEIVGTVRAVGSKTSKLKEGNRIHPVVTSLHVVELLLGLHAGDQILVDCRQAHLACIISQVALLEGSRVYVTFDSEAGRDILQQLGNDSHLVDRQANFKQALLGTSFDAIVTDSTDSYQLFDNIINSGGRIVALANTAPVEMVNAAVSFLNKSVTIGMFDPFNGFATAPVQHSSLLAKALKLLRRNVIRPIPSTQYDLSYLPEAVGHISQDDYVGRVVLTRTPNTAVPIHTVAEPLMFNSEASYLLIGCLGGLGRSLTTWMVSRGARHFIFLSRSGADKPEAAALVKELHELTRAQYLDLTVQVVRGDVSIRDDVSRAISCATKPIKGVVQAAMVLKDTLFTEMSLAQFNQVLHPKMLGTIHLHELLQGHDLDFFVMTSSVLGAIGAAMQSNYSAANAYLDHMARHRQSLGLQATSIALGMILNVGHVEEHPEVEKALKRNGMYGISVDEYLLMMEFACRRRDLSSTTNSHDPYKYDPCATAHIVTGMDPTRVSRAGGKSLWLKDNRLRNLVAALGGGNNGDGFNAEQSAGPSTHELLEAARAEGGVAAVKVTTLGLILARFSKLVLLPVHKIDPGKALAHYGMDSMISAELKSWAWKEFTVDLPFLGLLDQSLTFDDLAEKVVALAETKST</sequence>
<reference key="1">
    <citation type="journal article" date="2015" name="BMC Genomics">
        <title>Genomic sequence of the aflatoxigenic filamentous fungus Aspergillus nomius.</title>
        <authorList>
            <person name="Moore G.G."/>
            <person name="Mack B.M."/>
            <person name="Beltz S.B."/>
        </authorList>
    </citation>
    <scope>NUCLEOTIDE SEQUENCE [LARGE SCALE GENOMIC DNA]</scope>
    <source>
        <strain>ATCC 15546 / NRRL 13137 / CBS 260.88 / M93</strain>
    </source>
</reference>
<reference key="2">
    <citation type="journal article" date="2021" name="J. Am. Chem. Soc.">
        <title>Targeted genome mining reveals the biosynthetic gene clusters of natural product CYP51 inhibitors.</title>
        <authorList>
            <person name="Liu N."/>
            <person name="Abramyan E.D."/>
            <person name="Cheng W."/>
            <person name="Perlatti B."/>
            <person name="Harvey C.J.B."/>
            <person name="Bills G.F."/>
            <person name="Tang Y."/>
        </authorList>
    </citation>
    <scope>FUNCTION</scope>
    <scope>PATHWAY</scope>
</reference>
<feature type="chain" id="PRO_0000461545" description="Highly reducing polyketide synthase rstn3">
    <location>
        <begin position="1"/>
        <end position="2506"/>
    </location>
</feature>
<feature type="domain" description="Ketosynthase family 3 (KS3)" evidence="3 7">
    <location>
        <begin position="8"/>
        <end position="436"/>
    </location>
</feature>
<feature type="domain" description="Malonyl-CoA:ACP transacylase (MAT)" evidence="1 7">
    <location>
        <begin position="547"/>
        <end position="875"/>
    </location>
</feature>
<feature type="domain" description="PKS/mFAS DH" evidence="4 7">
    <location>
        <begin position="941"/>
        <end position="1212"/>
    </location>
</feature>
<feature type="domain" description="Enoyl reductase (ER)" evidence="1 7">
    <location>
        <begin position="1827"/>
        <end position="2093"/>
    </location>
</feature>
<feature type="domain" description="Ketoreductase (KR)" evidence="1 7">
    <location>
        <begin position="2116"/>
        <end position="2296"/>
    </location>
</feature>
<feature type="domain" description="Carrier" evidence="2 7">
    <location>
        <begin position="2423"/>
        <end position="2501"/>
    </location>
</feature>
<feature type="region of interest" description="N-terminal hotdog fold" evidence="4">
    <location>
        <begin position="941"/>
        <end position="1050"/>
    </location>
</feature>
<feature type="region of interest" description="C-terminal hotdog fold" evidence="4">
    <location>
        <begin position="1060"/>
        <end position="1212"/>
    </location>
</feature>
<feature type="region of interest" description="Methyltransferase (CMet) domain" evidence="1 7">
    <location>
        <begin position="1263"/>
        <end position="1563"/>
    </location>
</feature>
<feature type="active site" description="For beta-ketoacyl synthase activity" evidence="3">
    <location>
        <position position="183"/>
    </location>
</feature>
<feature type="active site" description="For beta-ketoacyl synthase activity" evidence="3">
    <location>
        <position position="318"/>
    </location>
</feature>
<feature type="active site" description="For beta-ketoacyl synthase activity" evidence="3">
    <location>
        <position position="358"/>
    </location>
</feature>
<feature type="active site" description="Proton acceptor; for dehydratase activity" evidence="4">
    <location>
        <position position="973"/>
    </location>
</feature>
<feature type="active site" description="Proton donor; for dehydratase activity" evidence="4">
    <location>
        <position position="1125"/>
    </location>
</feature>
<feature type="modified residue" description="O-(pantetheine 4'-phosphoryl)serine" evidence="2">
    <location>
        <position position="2460"/>
    </location>
</feature>
<accession>A0A0L1JG62</accession>
<gene>
    <name evidence="6" type="primary">rstn3</name>
    <name type="ORF">ANOM_001444</name>
</gene>
<dbReference type="EC" id="1.-.-.-" evidence="7"/>
<dbReference type="EC" id="2.3.1.-" evidence="7"/>
<dbReference type="EMBL" id="JNOM01000015">
    <property type="protein sequence ID" value="KNG90368.1"/>
    <property type="molecule type" value="Genomic_DNA"/>
</dbReference>
<dbReference type="RefSeq" id="XP_015411291.1">
    <property type="nucleotide sequence ID" value="XM_015546701.1"/>
</dbReference>
<dbReference type="STRING" id="1509407.A0A0L1JG62"/>
<dbReference type="GeneID" id="26803248"/>
<dbReference type="OrthoDB" id="25746at5052"/>
<dbReference type="Proteomes" id="UP000037505">
    <property type="component" value="Unassembled WGS sequence"/>
</dbReference>
<dbReference type="GO" id="GO:0004315">
    <property type="term" value="F:3-oxoacyl-[acyl-carrier-protein] synthase activity"/>
    <property type="evidence" value="ECO:0007669"/>
    <property type="project" value="InterPro"/>
</dbReference>
<dbReference type="GO" id="GO:0004312">
    <property type="term" value="F:fatty acid synthase activity"/>
    <property type="evidence" value="ECO:0007669"/>
    <property type="project" value="TreeGrafter"/>
</dbReference>
<dbReference type="GO" id="GO:0008168">
    <property type="term" value="F:methyltransferase activity"/>
    <property type="evidence" value="ECO:0007669"/>
    <property type="project" value="UniProtKB-KW"/>
</dbReference>
<dbReference type="GO" id="GO:0016491">
    <property type="term" value="F:oxidoreductase activity"/>
    <property type="evidence" value="ECO:0007669"/>
    <property type="project" value="UniProtKB-KW"/>
</dbReference>
<dbReference type="GO" id="GO:0031177">
    <property type="term" value="F:phosphopantetheine binding"/>
    <property type="evidence" value="ECO:0007669"/>
    <property type="project" value="InterPro"/>
</dbReference>
<dbReference type="GO" id="GO:0006633">
    <property type="term" value="P:fatty acid biosynthetic process"/>
    <property type="evidence" value="ECO:0007669"/>
    <property type="project" value="InterPro"/>
</dbReference>
<dbReference type="GO" id="GO:0032259">
    <property type="term" value="P:methylation"/>
    <property type="evidence" value="ECO:0007669"/>
    <property type="project" value="UniProtKB-KW"/>
</dbReference>
<dbReference type="GO" id="GO:0044550">
    <property type="term" value="P:secondary metabolite biosynthetic process"/>
    <property type="evidence" value="ECO:0007669"/>
    <property type="project" value="TreeGrafter"/>
</dbReference>
<dbReference type="CDD" id="cd02440">
    <property type="entry name" value="AdoMet_MTases"/>
    <property type="match status" value="1"/>
</dbReference>
<dbReference type="CDD" id="cd00833">
    <property type="entry name" value="PKS"/>
    <property type="match status" value="1"/>
</dbReference>
<dbReference type="Gene3D" id="3.40.47.10">
    <property type="match status" value="1"/>
</dbReference>
<dbReference type="Gene3D" id="1.10.1200.10">
    <property type="entry name" value="ACP-like"/>
    <property type="match status" value="1"/>
</dbReference>
<dbReference type="Gene3D" id="3.40.366.10">
    <property type="entry name" value="Malonyl-Coenzyme A Acyl Carrier Protein, domain 2"/>
    <property type="match status" value="1"/>
</dbReference>
<dbReference type="Gene3D" id="3.90.180.10">
    <property type="entry name" value="Medium-chain alcohol dehydrogenases, catalytic domain"/>
    <property type="match status" value="1"/>
</dbReference>
<dbReference type="Gene3D" id="3.40.50.720">
    <property type="entry name" value="NAD(P)-binding Rossmann-like Domain"/>
    <property type="match status" value="2"/>
</dbReference>
<dbReference type="Gene3D" id="3.10.129.110">
    <property type="entry name" value="Polyketide synthase dehydratase"/>
    <property type="match status" value="1"/>
</dbReference>
<dbReference type="Gene3D" id="3.40.50.150">
    <property type="entry name" value="Vaccinia Virus protein VP39"/>
    <property type="match status" value="1"/>
</dbReference>
<dbReference type="InterPro" id="IPR001227">
    <property type="entry name" value="Ac_transferase_dom_sf"/>
</dbReference>
<dbReference type="InterPro" id="IPR036736">
    <property type="entry name" value="ACP-like_sf"/>
</dbReference>
<dbReference type="InterPro" id="IPR014043">
    <property type="entry name" value="Acyl_transferase_dom"/>
</dbReference>
<dbReference type="InterPro" id="IPR016035">
    <property type="entry name" value="Acyl_Trfase/lysoPLipase"/>
</dbReference>
<dbReference type="InterPro" id="IPR011032">
    <property type="entry name" value="GroES-like_sf"/>
</dbReference>
<dbReference type="InterPro" id="IPR018201">
    <property type="entry name" value="Ketoacyl_synth_AS"/>
</dbReference>
<dbReference type="InterPro" id="IPR014031">
    <property type="entry name" value="Ketoacyl_synth_C"/>
</dbReference>
<dbReference type="InterPro" id="IPR014030">
    <property type="entry name" value="Ketoacyl_synth_N"/>
</dbReference>
<dbReference type="InterPro" id="IPR016036">
    <property type="entry name" value="Malonyl_transacylase_ACP-bd"/>
</dbReference>
<dbReference type="InterPro" id="IPR013217">
    <property type="entry name" value="Methyltransf_12"/>
</dbReference>
<dbReference type="InterPro" id="IPR036291">
    <property type="entry name" value="NAD(P)-bd_dom_sf"/>
</dbReference>
<dbReference type="InterPro" id="IPR032821">
    <property type="entry name" value="PKS_assoc"/>
</dbReference>
<dbReference type="InterPro" id="IPR020841">
    <property type="entry name" value="PKS_Beta-ketoAc_synthase_dom"/>
</dbReference>
<dbReference type="InterPro" id="IPR042104">
    <property type="entry name" value="PKS_dehydratase_sf"/>
</dbReference>
<dbReference type="InterPro" id="IPR020807">
    <property type="entry name" value="PKS_DH"/>
</dbReference>
<dbReference type="InterPro" id="IPR049551">
    <property type="entry name" value="PKS_DH_C"/>
</dbReference>
<dbReference type="InterPro" id="IPR049552">
    <property type="entry name" value="PKS_DH_N"/>
</dbReference>
<dbReference type="InterPro" id="IPR020843">
    <property type="entry name" value="PKS_ER"/>
</dbReference>
<dbReference type="InterPro" id="IPR013968">
    <property type="entry name" value="PKS_KR"/>
</dbReference>
<dbReference type="InterPro" id="IPR049900">
    <property type="entry name" value="PKS_mFAS_DH"/>
</dbReference>
<dbReference type="InterPro" id="IPR050091">
    <property type="entry name" value="PKS_NRPS_Biosynth_Enz"/>
</dbReference>
<dbReference type="InterPro" id="IPR020806">
    <property type="entry name" value="PKS_PP-bd"/>
</dbReference>
<dbReference type="InterPro" id="IPR009081">
    <property type="entry name" value="PP-bd_ACP"/>
</dbReference>
<dbReference type="InterPro" id="IPR029063">
    <property type="entry name" value="SAM-dependent_MTases_sf"/>
</dbReference>
<dbReference type="InterPro" id="IPR016039">
    <property type="entry name" value="Thiolase-like"/>
</dbReference>
<dbReference type="PANTHER" id="PTHR43775">
    <property type="entry name" value="FATTY ACID SYNTHASE"/>
    <property type="match status" value="1"/>
</dbReference>
<dbReference type="PANTHER" id="PTHR43775:SF50">
    <property type="entry name" value="HIGHLY REDUCING POLYKETIDE SYNTHASE SRDA"/>
    <property type="match status" value="1"/>
</dbReference>
<dbReference type="Pfam" id="PF00698">
    <property type="entry name" value="Acyl_transf_1"/>
    <property type="match status" value="1"/>
</dbReference>
<dbReference type="Pfam" id="PF16197">
    <property type="entry name" value="KAsynt_C_assoc"/>
    <property type="match status" value="1"/>
</dbReference>
<dbReference type="Pfam" id="PF00109">
    <property type="entry name" value="ketoacyl-synt"/>
    <property type="match status" value="1"/>
</dbReference>
<dbReference type="Pfam" id="PF02801">
    <property type="entry name" value="Ketoacyl-synt_C"/>
    <property type="match status" value="1"/>
</dbReference>
<dbReference type="Pfam" id="PF08659">
    <property type="entry name" value="KR"/>
    <property type="match status" value="1"/>
</dbReference>
<dbReference type="Pfam" id="PF08242">
    <property type="entry name" value="Methyltransf_12"/>
    <property type="match status" value="1"/>
</dbReference>
<dbReference type="Pfam" id="PF21089">
    <property type="entry name" value="PKS_DH_N"/>
    <property type="match status" value="1"/>
</dbReference>
<dbReference type="Pfam" id="PF14765">
    <property type="entry name" value="PS-DH"/>
    <property type="match status" value="1"/>
</dbReference>
<dbReference type="SMART" id="SM00827">
    <property type="entry name" value="PKS_AT"/>
    <property type="match status" value="1"/>
</dbReference>
<dbReference type="SMART" id="SM00826">
    <property type="entry name" value="PKS_DH"/>
    <property type="match status" value="1"/>
</dbReference>
<dbReference type="SMART" id="SM00829">
    <property type="entry name" value="PKS_ER"/>
    <property type="match status" value="1"/>
</dbReference>
<dbReference type="SMART" id="SM00822">
    <property type="entry name" value="PKS_KR"/>
    <property type="match status" value="1"/>
</dbReference>
<dbReference type="SMART" id="SM00825">
    <property type="entry name" value="PKS_KS"/>
    <property type="match status" value="1"/>
</dbReference>
<dbReference type="SMART" id="SM00823">
    <property type="entry name" value="PKS_PP"/>
    <property type="match status" value="1"/>
</dbReference>
<dbReference type="SUPFAM" id="SSF47336">
    <property type="entry name" value="ACP-like"/>
    <property type="match status" value="1"/>
</dbReference>
<dbReference type="SUPFAM" id="SSF52151">
    <property type="entry name" value="FabD/lysophospholipase-like"/>
    <property type="match status" value="1"/>
</dbReference>
<dbReference type="SUPFAM" id="SSF50129">
    <property type="entry name" value="GroES-like"/>
    <property type="match status" value="1"/>
</dbReference>
<dbReference type="SUPFAM" id="SSF51735">
    <property type="entry name" value="NAD(P)-binding Rossmann-fold domains"/>
    <property type="match status" value="2"/>
</dbReference>
<dbReference type="SUPFAM" id="SSF55048">
    <property type="entry name" value="Probable ACP-binding domain of malonyl-CoA ACP transacylase"/>
    <property type="match status" value="1"/>
</dbReference>
<dbReference type="SUPFAM" id="SSF53335">
    <property type="entry name" value="S-adenosyl-L-methionine-dependent methyltransferases"/>
    <property type="match status" value="1"/>
</dbReference>
<dbReference type="SUPFAM" id="SSF53901">
    <property type="entry name" value="Thiolase-like"/>
    <property type="match status" value="1"/>
</dbReference>
<dbReference type="PROSITE" id="PS50075">
    <property type="entry name" value="CARRIER"/>
    <property type="match status" value="1"/>
</dbReference>
<dbReference type="PROSITE" id="PS00606">
    <property type="entry name" value="KS3_1"/>
    <property type="match status" value="1"/>
</dbReference>
<dbReference type="PROSITE" id="PS52004">
    <property type="entry name" value="KS3_2"/>
    <property type="match status" value="1"/>
</dbReference>
<dbReference type="PROSITE" id="PS52019">
    <property type="entry name" value="PKS_MFAS_DH"/>
    <property type="match status" value="1"/>
</dbReference>
<protein>
    <recommendedName>
        <fullName evidence="6">Highly reducing polyketide synthase rstn3</fullName>
        <shortName evidence="6">HR-PKS rstn3</shortName>
        <ecNumber evidence="7">1.-.-.-</ecNumber>
        <ecNumber evidence="7">2.3.1.-</ecNumber>
    </recommendedName>
    <alternativeName>
        <fullName evidence="6">Restricticin biosynthesis cluster protein 3</fullName>
    </alternativeName>
</protein>
<evidence type="ECO:0000255" key="1"/>
<evidence type="ECO:0000255" key="2">
    <source>
        <dbReference type="PROSITE-ProRule" id="PRU00258"/>
    </source>
</evidence>
<evidence type="ECO:0000255" key="3">
    <source>
        <dbReference type="PROSITE-ProRule" id="PRU01348"/>
    </source>
</evidence>
<evidence type="ECO:0000255" key="4">
    <source>
        <dbReference type="PROSITE-ProRule" id="PRU01363"/>
    </source>
</evidence>
<evidence type="ECO:0000269" key="5">
    <source>
    </source>
</evidence>
<evidence type="ECO:0000303" key="6">
    <source>
    </source>
</evidence>
<evidence type="ECO:0000305" key="7">
    <source>
    </source>
</evidence>
<name>RSTN3_ASPN3</name>
<comment type="function">
    <text evidence="5">Highly reducing polyketide synthase; part of the gene cluster that mediates the biosynthesis of the tetrahydropyranyl antifungal agent restricticin that acts as an inhibitor of CYP51 and blocks the ergosterol biosynthesis (PubMed:33857369). The highly reducing polyketide synthase rstn3, the short chain dehydrogenase rstn4, the cyclase rstn5, the FAD-dependent monooxygenase rstn6 and the enoylreductase rstn7 are required to generate the first stable intermediate desmethylrestrictinol. Rstn3 with rstn7 biosynthesize the first polyketide chain intermediate that is reduced by rstn4, followed by epoxidation by rstn6 before 6-endo cyclization via epoxide opening by rstn5 leads to desmethylrestrictinol. The methyltransferase rstn1 then catalyzes the C4 O-methylation of desmethylrestrictinol to produce restrictinol, and the nonribosomal peptide synthetase rstn8 catalyzes the C3 esterification of restrictinol with glycine that leads to restricticin (PubMed:33857369).</text>
</comment>
<comment type="cofactor">
    <cofactor evidence="2">
        <name>pantetheine 4'-phosphate</name>
        <dbReference type="ChEBI" id="CHEBI:47942"/>
    </cofactor>
</comment>
<comment type="pathway">
    <text evidence="5">Antifungal biosynthesis.</text>
</comment>
<comment type="domain">
    <text evidence="7">Multidomain protein; including a ketosynthase (KS) that catalyzes repeated decarboxylative condensation to elongate the polyketide backbone; a malonyl-CoA:ACP transacylase (MAT) that selects and transfers the extender unit malonyl-CoA; a dehydratase (DH) domain that reduces hydroxyl groups to enoyl groups; a methyltransferase (CMeT) domain responsible for the incorporation of methyl groups; an enoylreductase (ER) domain that reduces enoyl groups to alkyl group; a ketoreductase (KR) domain that catalyzes beta-ketoreduction steps; and an acyl-carrier protein (ACP) that serves as the tether of the growing and completed polyketide via its phosphopantetheinyl arm.</text>
</comment>
<proteinExistence type="inferred from homology"/>
<keyword id="KW-0012">Acyltransferase</keyword>
<keyword id="KW-0489">Methyltransferase</keyword>
<keyword id="KW-0511">Multifunctional enzyme</keyword>
<keyword id="KW-0521">NADP</keyword>
<keyword id="KW-0560">Oxidoreductase</keyword>
<keyword id="KW-0596">Phosphopantetheine</keyword>
<keyword id="KW-0597">Phosphoprotein</keyword>
<keyword id="KW-1185">Reference proteome</keyword>
<keyword id="KW-0808">Transferase</keyword>